<name>TIG_GLUOX</name>
<protein>
    <recommendedName>
        <fullName evidence="1">Trigger factor</fullName>
        <shortName evidence="1">TF</shortName>
        <ecNumber evidence="1">5.2.1.8</ecNumber>
    </recommendedName>
    <alternativeName>
        <fullName evidence="1">PPIase</fullName>
    </alternativeName>
</protein>
<reference key="1">
    <citation type="journal article" date="2005" name="Nat. Biotechnol.">
        <title>Complete genome sequence of the acetic acid bacterium Gluconobacter oxydans.</title>
        <authorList>
            <person name="Prust C."/>
            <person name="Hoffmeister M."/>
            <person name="Liesegang H."/>
            <person name="Wiezer A."/>
            <person name="Fricke W.F."/>
            <person name="Ehrenreich A."/>
            <person name="Gottschalk G."/>
            <person name="Deppenmeier U."/>
        </authorList>
    </citation>
    <scope>NUCLEOTIDE SEQUENCE [LARGE SCALE GENOMIC DNA]</scope>
    <source>
        <strain>621H</strain>
    </source>
</reference>
<comment type="function">
    <text evidence="1">Involved in protein export. Acts as a chaperone by maintaining the newly synthesized protein in an open conformation. Functions as a peptidyl-prolyl cis-trans isomerase.</text>
</comment>
<comment type="catalytic activity">
    <reaction evidence="1">
        <text>[protein]-peptidylproline (omega=180) = [protein]-peptidylproline (omega=0)</text>
        <dbReference type="Rhea" id="RHEA:16237"/>
        <dbReference type="Rhea" id="RHEA-COMP:10747"/>
        <dbReference type="Rhea" id="RHEA-COMP:10748"/>
        <dbReference type="ChEBI" id="CHEBI:83833"/>
        <dbReference type="ChEBI" id="CHEBI:83834"/>
        <dbReference type="EC" id="5.2.1.8"/>
    </reaction>
</comment>
<comment type="subcellular location">
    <subcellularLocation>
        <location>Cytoplasm</location>
    </subcellularLocation>
    <text evidence="1">About half TF is bound to the ribosome near the polypeptide exit tunnel while the other half is free in the cytoplasm.</text>
</comment>
<comment type="domain">
    <text evidence="1">Consists of 3 domains; the N-terminus binds the ribosome, the middle domain has PPIase activity, while the C-terminus has intrinsic chaperone activity on its own.</text>
</comment>
<comment type="similarity">
    <text evidence="1">Belongs to the FKBP-type PPIase family. Tig subfamily.</text>
</comment>
<evidence type="ECO:0000255" key="1">
    <source>
        <dbReference type="HAMAP-Rule" id="MF_00303"/>
    </source>
</evidence>
<dbReference type="EC" id="5.2.1.8" evidence="1"/>
<dbReference type="EMBL" id="CP000009">
    <property type="protein sequence ID" value="AAW59884.1"/>
    <property type="molecule type" value="Genomic_DNA"/>
</dbReference>
<dbReference type="RefSeq" id="WP_011251688.1">
    <property type="nucleotide sequence ID" value="NC_006677.1"/>
</dbReference>
<dbReference type="SMR" id="Q5FUR2"/>
<dbReference type="STRING" id="290633.GOX0088"/>
<dbReference type="KEGG" id="gox:GOX0088"/>
<dbReference type="eggNOG" id="COG0544">
    <property type="taxonomic scope" value="Bacteria"/>
</dbReference>
<dbReference type="HOGENOM" id="CLU_033058_2_2_5"/>
<dbReference type="Proteomes" id="UP000006375">
    <property type="component" value="Chromosome"/>
</dbReference>
<dbReference type="GO" id="GO:0005737">
    <property type="term" value="C:cytoplasm"/>
    <property type="evidence" value="ECO:0007669"/>
    <property type="project" value="UniProtKB-SubCell"/>
</dbReference>
<dbReference type="GO" id="GO:0003755">
    <property type="term" value="F:peptidyl-prolyl cis-trans isomerase activity"/>
    <property type="evidence" value="ECO:0007669"/>
    <property type="project" value="UniProtKB-UniRule"/>
</dbReference>
<dbReference type="GO" id="GO:0044183">
    <property type="term" value="F:protein folding chaperone"/>
    <property type="evidence" value="ECO:0007669"/>
    <property type="project" value="TreeGrafter"/>
</dbReference>
<dbReference type="GO" id="GO:0043022">
    <property type="term" value="F:ribosome binding"/>
    <property type="evidence" value="ECO:0007669"/>
    <property type="project" value="TreeGrafter"/>
</dbReference>
<dbReference type="GO" id="GO:0051083">
    <property type="term" value="P:'de novo' cotranslational protein folding"/>
    <property type="evidence" value="ECO:0007669"/>
    <property type="project" value="TreeGrafter"/>
</dbReference>
<dbReference type="GO" id="GO:0051301">
    <property type="term" value="P:cell division"/>
    <property type="evidence" value="ECO:0007669"/>
    <property type="project" value="UniProtKB-KW"/>
</dbReference>
<dbReference type="GO" id="GO:0061077">
    <property type="term" value="P:chaperone-mediated protein folding"/>
    <property type="evidence" value="ECO:0007669"/>
    <property type="project" value="TreeGrafter"/>
</dbReference>
<dbReference type="GO" id="GO:0015031">
    <property type="term" value="P:protein transport"/>
    <property type="evidence" value="ECO:0007669"/>
    <property type="project" value="UniProtKB-UniRule"/>
</dbReference>
<dbReference type="GO" id="GO:0043335">
    <property type="term" value="P:protein unfolding"/>
    <property type="evidence" value="ECO:0007669"/>
    <property type="project" value="TreeGrafter"/>
</dbReference>
<dbReference type="FunFam" id="3.10.50.40:FF:000001">
    <property type="entry name" value="Trigger factor"/>
    <property type="match status" value="1"/>
</dbReference>
<dbReference type="Gene3D" id="3.10.50.40">
    <property type="match status" value="1"/>
</dbReference>
<dbReference type="Gene3D" id="3.30.70.1050">
    <property type="entry name" value="Trigger factor ribosome-binding domain"/>
    <property type="match status" value="1"/>
</dbReference>
<dbReference type="Gene3D" id="1.10.3120.10">
    <property type="entry name" value="Trigger factor, C-terminal domain"/>
    <property type="match status" value="1"/>
</dbReference>
<dbReference type="HAMAP" id="MF_00303">
    <property type="entry name" value="Trigger_factor_Tig"/>
    <property type="match status" value="1"/>
</dbReference>
<dbReference type="InterPro" id="IPR046357">
    <property type="entry name" value="PPIase_dom_sf"/>
</dbReference>
<dbReference type="InterPro" id="IPR001179">
    <property type="entry name" value="PPIase_FKBP_dom"/>
</dbReference>
<dbReference type="InterPro" id="IPR005215">
    <property type="entry name" value="Trig_fac"/>
</dbReference>
<dbReference type="InterPro" id="IPR008880">
    <property type="entry name" value="Trigger_fac_C"/>
</dbReference>
<dbReference type="InterPro" id="IPR037041">
    <property type="entry name" value="Trigger_fac_C_sf"/>
</dbReference>
<dbReference type="InterPro" id="IPR008881">
    <property type="entry name" value="Trigger_fac_ribosome-bd_bac"/>
</dbReference>
<dbReference type="InterPro" id="IPR036611">
    <property type="entry name" value="Trigger_fac_ribosome-bd_sf"/>
</dbReference>
<dbReference type="InterPro" id="IPR027304">
    <property type="entry name" value="Trigger_fact/SurA_dom_sf"/>
</dbReference>
<dbReference type="NCBIfam" id="TIGR00115">
    <property type="entry name" value="tig"/>
    <property type="match status" value="1"/>
</dbReference>
<dbReference type="PANTHER" id="PTHR30560">
    <property type="entry name" value="TRIGGER FACTOR CHAPERONE AND PEPTIDYL-PROLYL CIS/TRANS ISOMERASE"/>
    <property type="match status" value="1"/>
</dbReference>
<dbReference type="PANTHER" id="PTHR30560:SF3">
    <property type="entry name" value="TRIGGER FACTOR-LIKE PROTEIN TIG, CHLOROPLASTIC"/>
    <property type="match status" value="1"/>
</dbReference>
<dbReference type="Pfam" id="PF00254">
    <property type="entry name" value="FKBP_C"/>
    <property type="match status" value="1"/>
</dbReference>
<dbReference type="Pfam" id="PF05698">
    <property type="entry name" value="Trigger_C"/>
    <property type="match status" value="1"/>
</dbReference>
<dbReference type="Pfam" id="PF05697">
    <property type="entry name" value="Trigger_N"/>
    <property type="match status" value="1"/>
</dbReference>
<dbReference type="PIRSF" id="PIRSF003095">
    <property type="entry name" value="Trigger_factor"/>
    <property type="match status" value="1"/>
</dbReference>
<dbReference type="SUPFAM" id="SSF54534">
    <property type="entry name" value="FKBP-like"/>
    <property type="match status" value="1"/>
</dbReference>
<dbReference type="SUPFAM" id="SSF109998">
    <property type="entry name" value="Triger factor/SurA peptide-binding domain-like"/>
    <property type="match status" value="1"/>
</dbReference>
<dbReference type="SUPFAM" id="SSF102735">
    <property type="entry name" value="Trigger factor ribosome-binding domain"/>
    <property type="match status" value="1"/>
</dbReference>
<dbReference type="PROSITE" id="PS50059">
    <property type="entry name" value="FKBP_PPIASE"/>
    <property type="match status" value="1"/>
</dbReference>
<accession>Q5FUR2</accession>
<organism>
    <name type="scientific">Gluconobacter oxydans (strain 621H)</name>
    <name type="common">Gluconobacter suboxydans</name>
    <dbReference type="NCBI Taxonomy" id="290633"/>
    <lineage>
        <taxon>Bacteria</taxon>
        <taxon>Pseudomonadati</taxon>
        <taxon>Pseudomonadota</taxon>
        <taxon>Alphaproteobacteria</taxon>
        <taxon>Acetobacterales</taxon>
        <taxon>Acetobacteraceae</taxon>
        <taxon>Gluconobacter</taxon>
    </lineage>
</organism>
<sequence length="443" mass="49342">MQVTPTLNEGLKRAFTVVVPSADLQARRDARLAEVAKTIKLPGFRPGKVPASLVKQRYGESVNAELLEEAVNDATAKLFEEQKIRPAMQPKIEVVSAIEDGKDLEFKVETEVLPEIEVPDLSGLKLTRLGAKVSEETVDKALNDVARRSRKFETIEEDRPAAKGDVLCVDFVGKLDGTPFDGGTADDVNVEIGGEGFIPGFAEQMEGMKAGEERVINVTFPADYQAEELAGKAVTFDIKAKSLKKAVDPAIDDELAKTIGFENLEQIRKIITEQAEGEYQQLSRLRIKRDLLDALSEKTDFEAPSSMVDAEFNQIWARVEEDRKVGRLDEEDAGKDEETLKADYRRIAERRVKLGLLLAEIGRKQEIQVSREELLGAMQQEARRYPGQEQMVFEFFSKNPQAVEGLRGPILENKVVDYLIELADVTDKEVTPEELAEIPPAEL</sequence>
<keyword id="KW-0131">Cell cycle</keyword>
<keyword id="KW-0132">Cell division</keyword>
<keyword id="KW-0143">Chaperone</keyword>
<keyword id="KW-0963">Cytoplasm</keyword>
<keyword id="KW-0413">Isomerase</keyword>
<keyword id="KW-1185">Reference proteome</keyword>
<keyword id="KW-0697">Rotamase</keyword>
<gene>
    <name evidence="1" type="primary">tig</name>
    <name type="ordered locus">GOX0088</name>
</gene>
<feature type="chain" id="PRO_0000179359" description="Trigger factor">
    <location>
        <begin position="1"/>
        <end position="443"/>
    </location>
</feature>
<feature type="domain" description="PPIase FKBP-type" evidence="1">
    <location>
        <begin position="164"/>
        <end position="249"/>
    </location>
</feature>
<proteinExistence type="inferred from homology"/>